<keyword id="KW-0256">Endoplasmic reticulum</keyword>
<keyword id="KW-0472">Membrane</keyword>
<keyword id="KW-1185">Reference proteome</keyword>
<keyword id="KW-0812">Transmembrane</keyword>
<keyword id="KW-1133">Transmembrane helix</keyword>
<sequence length="91" mass="9877">MEIFNDLSRKLVFPIDYPSQRRVAKLTDIILGSGTLVSCLLGFYAGSLSLTLYAFAAAYGLALLLVVPAYGKYRQQKLAWVGSAAATTKDL</sequence>
<comment type="function">
    <text evidence="1">Component of the signal peptidase complex (SPC) which catalyzes the cleavage of N-terminal signal sequences from nascent proteins as they are translocated into the lumen of the endoplasmic reticulum. Dispensable for SPC enzymatic activity.</text>
</comment>
<comment type="subunit">
    <text evidence="1 2">Component of the signal peptidase complex (SPC) composed of a catalytic subunit SEC11 and three accessory subunits SPC1, SPC2 and SPC3 (By similarity). The complex induces a local thinning of the ER membrane which is used to measure the length of the signal peptide (SP) h-region of protein substrates. This ensures the selectivity of the complex towards h-regions shorter than 18-20 amino acids (By similarity). SPC associates with the translocon complex (By similarity).</text>
</comment>
<comment type="subcellular location">
    <subcellularLocation>
        <location evidence="1">Endoplasmic reticulum membrane</location>
        <topology evidence="3">Multi-pass membrane protein</topology>
    </subcellularLocation>
</comment>
<comment type="similarity">
    <text evidence="4">Belongs to the SPCS1 family.</text>
</comment>
<gene>
    <name type="primary">SPC1</name>
    <name type="ordered locus">AGR325C</name>
</gene>
<dbReference type="EMBL" id="AE016820">
    <property type="protein sequence ID" value="AAS54815.1"/>
    <property type="molecule type" value="Genomic_DNA"/>
</dbReference>
<dbReference type="RefSeq" id="NP_986991.1">
    <property type="nucleotide sequence ID" value="NM_212053.1"/>
</dbReference>
<dbReference type="SMR" id="Q74Z81"/>
<dbReference type="FunCoup" id="Q74Z81">
    <property type="interactions" value="150"/>
</dbReference>
<dbReference type="STRING" id="284811.Q74Z81"/>
<dbReference type="EnsemblFungi" id="AAS54815">
    <property type="protein sequence ID" value="AAS54815"/>
    <property type="gene ID" value="AGOS_AGR325C"/>
</dbReference>
<dbReference type="GeneID" id="4623294"/>
<dbReference type="KEGG" id="ago:AGOS_AGR325C"/>
<dbReference type="eggNOG" id="KOG4112">
    <property type="taxonomic scope" value="Eukaryota"/>
</dbReference>
<dbReference type="HOGENOM" id="CLU_134505_2_0_1"/>
<dbReference type="InParanoid" id="Q74Z81"/>
<dbReference type="OMA" id="KLQWVQP"/>
<dbReference type="OrthoDB" id="263893at2759"/>
<dbReference type="Proteomes" id="UP000000591">
    <property type="component" value="Chromosome VII"/>
</dbReference>
<dbReference type="GO" id="GO:0005787">
    <property type="term" value="C:signal peptidase complex"/>
    <property type="evidence" value="ECO:0000318"/>
    <property type="project" value="GO_Central"/>
</dbReference>
<dbReference type="GO" id="GO:0045047">
    <property type="term" value="P:protein targeting to ER"/>
    <property type="evidence" value="ECO:0000318"/>
    <property type="project" value="GO_Central"/>
</dbReference>
<dbReference type="GO" id="GO:0006465">
    <property type="term" value="P:signal peptide processing"/>
    <property type="evidence" value="ECO:0000318"/>
    <property type="project" value="GO_Central"/>
</dbReference>
<dbReference type="InterPro" id="IPR009542">
    <property type="entry name" value="Spc1/SPCS1"/>
</dbReference>
<dbReference type="PANTHER" id="PTHR13202">
    <property type="entry name" value="MICROSOMAL SIGNAL PEPTIDASE 12 KDA SUBUNIT"/>
    <property type="match status" value="1"/>
</dbReference>
<dbReference type="PANTHER" id="PTHR13202:SF0">
    <property type="entry name" value="SIGNAL PEPTIDASE COMPLEX SUBUNIT 1"/>
    <property type="match status" value="1"/>
</dbReference>
<dbReference type="Pfam" id="PF06645">
    <property type="entry name" value="SPC12"/>
    <property type="match status" value="1"/>
</dbReference>
<evidence type="ECO:0000250" key="1">
    <source>
        <dbReference type="UniProtKB" id="P46965"/>
    </source>
</evidence>
<evidence type="ECO:0000250" key="2">
    <source>
        <dbReference type="UniProtKB" id="P67812"/>
    </source>
</evidence>
<evidence type="ECO:0000255" key="3"/>
<evidence type="ECO:0000305" key="4"/>
<proteinExistence type="inferred from homology"/>
<reference key="1">
    <citation type="journal article" date="2004" name="Science">
        <title>The Ashbya gossypii genome as a tool for mapping the ancient Saccharomyces cerevisiae genome.</title>
        <authorList>
            <person name="Dietrich F.S."/>
            <person name="Voegeli S."/>
            <person name="Brachat S."/>
            <person name="Lerch A."/>
            <person name="Gates K."/>
            <person name="Steiner S."/>
            <person name="Mohr C."/>
            <person name="Poehlmann R."/>
            <person name="Luedi P."/>
            <person name="Choi S."/>
            <person name="Wing R.A."/>
            <person name="Flavier A."/>
            <person name="Gaffney T.D."/>
            <person name="Philippsen P."/>
        </authorList>
    </citation>
    <scope>NUCLEOTIDE SEQUENCE [LARGE SCALE GENOMIC DNA]</scope>
    <source>
        <strain>ATCC 10895 / CBS 109.51 / FGSC 9923 / NRRL Y-1056</strain>
    </source>
</reference>
<reference key="2">
    <citation type="journal article" date="2013" name="G3 (Bethesda)">
        <title>Genomes of Ashbya fungi isolated from insects reveal four mating-type loci, numerous translocations, lack of transposons, and distinct gene duplications.</title>
        <authorList>
            <person name="Dietrich F.S."/>
            <person name="Voegeli S."/>
            <person name="Kuo S."/>
            <person name="Philippsen P."/>
        </authorList>
    </citation>
    <scope>GENOME REANNOTATION</scope>
    <source>
        <strain>ATCC 10895 / CBS 109.51 / FGSC 9923 / NRRL Y-1056</strain>
    </source>
</reference>
<feature type="chain" id="PRO_0000215161" description="Signal peptidase complex subunit 1">
    <location>
        <begin position="1"/>
        <end position="91"/>
    </location>
</feature>
<feature type="topological domain" description="Cytoplasmic" evidence="3">
    <location>
        <begin position="1"/>
        <end position="28"/>
    </location>
</feature>
<feature type="transmembrane region" description="Helical" evidence="3">
    <location>
        <begin position="29"/>
        <end position="48"/>
    </location>
</feature>
<feature type="topological domain" description="Lumenal" evidence="3">
    <location>
        <begin position="49"/>
        <end position="51"/>
    </location>
</feature>
<feature type="transmembrane region" description="Helical" evidence="3">
    <location>
        <begin position="52"/>
        <end position="71"/>
    </location>
</feature>
<feature type="topological domain" description="Cytoplasmic" evidence="3">
    <location>
        <begin position="72"/>
        <end position="91"/>
    </location>
</feature>
<accession>Q74Z81</accession>
<protein>
    <recommendedName>
        <fullName>Signal peptidase complex subunit 1</fullName>
    </recommendedName>
</protein>
<organism>
    <name type="scientific">Eremothecium gossypii (strain ATCC 10895 / CBS 109.51 / FGSC 9923 / NRRL Y-1056)</name>
    <name type="common">Yeast</name>
    <name type="synonym">Ashbya gossypii</name>
    <dbReference type="NCBI Taxonomy" id="284811"/>
    <lineage>
        <taxon>Eukaryota</taxon>
        <taxon>Fungi</taxon>
        <taxon>Dikarya</taxon>
        <taxon>Ascomycota</taxon>
        <taxon>Saccharomycotina</taxon>
        <taxon>Saccharomycetes</taxon>
        <taxon>Saccharomycetales</taxon>
        <taxon>Saccharomycetaceae</taxon>
        <taxon>Eremothecium</taxon>
    </lineage>
</organism>
<name>SPC1_EREGS</name>